<accession>P0CN17</accession>
<accession>Q55R79</accession>
<accession>Q5KEZ1</accession>
<dbReference type="EMBL" id="AAEY01000030">
    <property type="protein sequence ID" value="EAL20300.1"/>
    <property type="molecule type" value="Genomic_DNA"/>
</dbReference>
<dbReference type="RefSeq" id="XP_774947.1">
    <property type="nucleotide sequence ID" value="XM_769854.1"/>
</dbReference>
<dbReference type="SMR" id="P0CN17"/>
<dbReference type="EnsemblFungi" id="AAW44134">
    <property type="protein sequence ID" value="AAW44134"/>
    <property type="gene ID" value="CNF03700"/>
</dbReference>
<dbReference type="GeneID" id="4936664"/>
<dbReference type="KEGG" id="cnb:CNBF1120"/>
<dbReference type="VEuPathDB" id="FungiDB:CNBF1120"/>
<dbReference type="HOGENOM" id="CLU_028431_2_1_1"/>
<dbReference type="OrthoDB" id="3304at5206"/>
<dbReference type="GO" id="GO:0005789">
    <property type="term" value="C:endoplasmic reticulum membrane"/>
    <property type="evidence" value="ECO:0007669"/>
    <property type="project" value="UniProtKB-SubCell"/>
</dbReference>
<dbReference type="GO" id="GO:0000139">
    <property type="term" value="C:Golgi membrane"/>
    <property type="evidence" value="ECO:0007669"/>
    <property type="project" value="UniProtKB-SubCell"/>
</dbReference>
<dbReference type="InterPro" id="IPR004345">
    <property type="entry name" value="TB2_DP1_HVA22"/>
</dbReference>
<dbReference type="PANTHER" id="PTHR12300">
    <property type="entry name" value="HVA22-LIKE PROTEINS"/>
    <property type="match status" value="1"/>
</dbReference>
<dbReference type="PANTHER" id="PTHR12300:SF161">
    <property type="entry name" value="RECEPTOR EXPRESSION-ENHANCING PROTEIN"/>
    <property type="match status" value="1"/>
</dbReference>
<dbReference type="Pfam" id="PF03134">
    <property type="entry name" value="TB2_DP1_HVA22"/>
    <property type="match status" value="1"/>
</dbReference>
<proteinExistence type="inferred from homology"/>
<protein>
    <recommendedName>
        <fullName>Protein YOP1</fullName>
    </recommendedName>
</protein>
<evidence type="ECO:0000250" key="1">
    <source>
        <dbReference type="UniProtKB" id="Q12402"/>
    </source>
</evidence>
<evidence type="ECO:0000255" key="2"/>
<evidence type="ECO:0000256" key="3">
    <source>
        <dbReference type="SAM" id="MobiDB-lite"/>
    </source>
</evidence>
<evidence type="ECO:0000305" key="4"/>
<sequence length="206" mass="23050">MAAHSEQIKNNFLNNPYAQQVFNIANGQVSALDAELNKYPILRQLEQQTKVPKAYGVIALGFSSVLLIFFNMFGLAQPISNLIGWALPAYLSILAIESPQTNDDKQWLTYWVVFGSLNLVESMGLRAVLYWVPMYFVFKTLFTIWLMLPATRGAEILYFHFLRPMVGNVKSRSQSSFGTSDPLAKETGFNPAGTTAPSSFAHEKTL</sequence>
<organism>
    <name type="scientific">Cryptococcus neoformans var. neoformans serotype D (strain B-3501A)</name>
    <name type="common">Filobasidiella neoformans</name>
    <dbReference type="NCBI Taxonomy" id="283643"/>
    <lineage>
        <taxon>Eukaryota</taxon>
        <taxon>Fungi</taxon>
        <taxon>Dikarya</taxon>
        <taxon>Basidiomycota</taxon>
        <taxon>Agaricomycotina</taxon>
        <taxon>Tremellomycetes</taxon>
        <taxon>Tremellales</taxon>
        <taxon>Cryptococcaceae</taxon>
        <taxon>Cryptococcus</taxon>
        <taxon>Cryptococcus neoformans species complex</taxon>
    </lineage>
</organism>
<keyword id="KW-0256">Endoplasmic reticulum</keyword>
<keyword id="KW-0333">Golgi apparatus</keyword>
<keyword id="KW-0472">Membrane</keyword>
<keyword id="KW-0812">Transmembrane</keyword>
<keyword id="KW-1133">Transmembrane helix</keyword>
<reference key="1">
    <citation type="journal article" date="2005" name="Science">
        <title>The genome of the basidiomycetous yeast and human pathogen Cryptococcus neoformans.</title>
        <authorList>
            <person name="Loftus B.J."/>
            <person name="Fung E."/>
            <person name="Roncaglia P."/>
            <person name="Rowley D."/>
            <person name="Amedeo P."/>
            <person name="Bruno D."/>
            <person name="Vamathevan J."/>
            <person name="Miranda M."/>
            <person name="Anderson I.J."/>
            <person name="Fraser J.A."/>
            <person name="Allen J.E."/>
            <person name="Bosdet I.E."/>
            <person name="Brent M.R."/>
            <person name="Chiu R."/>
            <person name="Doering T.L."/>
            <person name="Donlin M.J."/>
            <person name="D'Souza C.A."/>
            <person name="Fox D.S."/>
            <person name="Grinberg V."/>
            <person name="Fu J."/>
            <person name="Fukushima M."/>
            <person name="Haas B.J."/>
            <person name="Huang J.C."/>
            <person name="Janbon G."/>
            <person name="Jones S.J.M."/>
            <person name="Koo H.L."/>
            <person name="Krzywinski M.I."/>
            <person name="Kwon-Chung K.J."/>
            <person name="Lengeler K.B."/>
            <person name="Maiti R."/>
            <person name="Marra M.A."/>
            <person name="Marra R.E."/>
            <person name="Mathewson C.A."/>
            <person name="Mitchell T.G."/>
            <person name="Pertea M."/>
            <person name="Riggs F.R."/>
            <person name="Salzberg S.L."/>
            <person name="Schein J.E."/>
            <person name="Shvartsbeyn A."/>
            <person name="Shin H."/>
            <person name="Shumway M."/>
            <person name="Specht C.A."/>
            <person name="Suh B.B."/>
            <person name="Tenney A."/>
            <person name="Utterback T.R."/>
            <person name="Wickes B.L."/>
            <person name="Wortman J.R."/>
            <person name="Wye N.H."/>
            <person name="Kronstad J.W."/>
            <person name="Lodge J.K."/>
            <person name="Heitman J."/>
            <person name="Davis R.W."/>
            <person name="Fraser C.M."/>
            <person name="Hyman R.W."/>
        </authorList>
    </citation>
    <scope>NUCLEOTIDE SEQUENCE [LARGE SCALE GENOMIC DNA]</scope>
    <source>
        <strain>B-3501A</strain>
    </source>
</reference>
<feature type="chain" id="PRO_0000410062" description="Protein YOP1">
    <location>
        <begin position="1"/>
        <end position="206"/>
    </location>
</feature>
<feature type="topological domain" description="Cytoplasmic" evidence="1">
    <location>
        <begin position="1"/>
        <end position="52"/>
    </location>
</feature>
<feature type="transmembrane region" description="Helical" evidence="1">
    <location>
        <begin position="53"/>
        <end position="72"/>
    </location>
</feature>
<feature type="topological domain" description="Lumenal" evidence="1">
    <location>
        <begin position="73"/>
        <end position="74"/>
    </location>
</feature>
<feature type="transmembrane region" description="Helical" evidence="1">
    <location>
        <begin position="75"/>
        <end position="95"/>
    </location>
</feature>
<feature type="topological domain" description="Cytoplasmic" evidence="1">
    <location>
        <begin position="96"/>
        <end position="105"/>
    </location>
</feature>
<feature type="transmembrane region" description="Helical" evidence="1">
    <location>
        <begin position="106"/>
        <end position="122"/>
    </location>
</feature>
<feature type="topological domain" description="Lumenal" evidence="1">
    <location>
        <begin position="123"/>
        <end position="126"/>
    </location>
</feature>
<feature type="transmembrane region" description="Helical" evidence="1">
    <location>
        <begin position="127"/>
        <end position="145"/>
    </location>
</feature>
<feature type="topological domain" description="Cytoplasmic" evidence="1">
    <location>
        <begin position="146"/>
        <end position="206"/>
    </location>
</feature>
<feature type="region of interest" description="Disordered" evidence="3">
    <location>
        <begin position="177"/>
        <end position="206"/>
    </location>
</feature>
<comment type="function">
    <text evidence="1">Required to generate and maintain the structure of the tubular endoplasmic reticulum network and the vacuole. Induces high curvature in membranes and causes membrane tubule formation. Involved in membrane/vesicle trafficking.</text>
</comment>
<comment type="subunit">
    <text evidence="1">Oligomer.</text>
</comment>
<comment type="subcellular location">
    <subcellularLocation>
        <location evidence="1">Endoplasmic reticulum membrane</location>
        <topology evidence="1">Multi-pass membrane protein</topology>
    </subcellularLocation>
    <subcellularLocation>
        <location evidence="1">Golgi apparatus membrane</location>
        <topology evidence="2">Multi-pass membrane protein</topology>
    </subcellularLocation>
</comment>
<comment type="domain">
    <text evidence="1">The short lumenal loops between transmembrane domains 1 and 2 and between transmembrane domains 3 and 4 may impart a wedge-like configuration, thus deforming membranes.</text>
</comment>
<comment type="similarity">
    <text evidence="4">Belongs to the DP1 family.</text>
</comment>
<name>YOP1_CRYNB</name>
<gene>
    <name type="primary">YOP1</name>
    <name type="ordered locus">CNBF1120</name>
</gene>